<accession>Q4WNX1</accession>
<name>RT25_ASPFU</name>
<evidence type="ECO:0000250" key="1"/>
<evidence type="ECO:0000305" key="2"/>
<sequence length="258" mass="29699">MGKYNFTALRVRQTALRQHAAGKIRAPPKWLDVVADIPPAQVLVRNQAPQHQLVRQRVKTLPGTSKPQVVFEVQEKRIKPKKASRMFLPTEIKYEEDQLRQEFFRDHPWELARPRVLVESTGKDSEHYDWSRLQQPGKRLDGESVVQRQLWLLNNVPDMTKSAAYDIARCEFYRLRLQEDIERRVAAEEAEATGATFGPSLLEVGMELENQEYERWKAWAKMEAQLLDQKTAAFTGAPEIAAADDAVEELEEKVPVPV</sequence>
<proteinExistence type="inferred from homology"/>
<protein>
    <recommendedName>
        <fullName evidence="2">Small ribosomal subunit protein mS23</fullName>
    </recommendedName>
    <alternativeName>
        <fullName>37S ribosomal protein S25, mitochondrial</fullName>
    </alternativeName>
</protein>
<dbReference type="EMBL" id="AAHF01000005">
    <property type="protein sequence ID" value="EAL90063.1"/>
    <property type="molecule type" value="Genomic_DNA"/>
</dbReference>
<dbReference type="RefSeq" id="XP_752101.1">
    <property type="nucleotide sequence ID" value="XM_747008.1"/>
</dbReference>
<dbReference type="SMR" id="Q4WNX1"/>
<dbReference type="FunCoup" id="Q4WNX1">
    <property type="interactions" value="117"/>
</dbReference>
<dbReference type="STRING" id="330879.Q4WNX1"/>
<dbReference type="EnsemblFungi" id="EAL90063">
    <property type="protein sequence ID" value="EAL90063"/>
    <property type="gene ID" value="AFUA_4G07250"/>
</dbReference>
<dbReference type="GeneID" id="3509561"/>
<dbReference type="KEGG" id="afm:AFUA_4G07250"/>
<dbReference type="VEuPathDB" id="FungiDB:Afu4g07250"/>
<dbReference type="eggNOG" id="ENOG502RZQQ">
    <property type="taxonomic scope" value="Eukaryota"/>
</dbReference>
<dbReference type="HOGENOM" id="CLU_081350_0_0_1"/>
<dbReference type="InParanoid" id="Q4WNX1"/>
<dbReference type="OMA" id="ENWKIWA"/>
<dbReference type="OrthoDB" id="5542239at2759"/>
<dbReference type="Proteomes" id="UP000002530">
    <property type="component" value="Chromosome 4"/>
</dbReference>
<dbReference type="GO" id="GO:0005763">
    <property type="term" value="C:mitochondrial small ribosomal subunit"/>
    <property type="evidence" value="ECO:0000318"/>
    <property type="project" value="GO_Central"/>
</dbReference>
<dbReference type="GO" id="GO:0003735">
    <property type="term" value="F:structural constituent of ribosome"/>
    <property type="evidence" value="ECO:0000318"/>
    <property type="project" value="GO_Central"/>
</dbReference>
<dbReference type="InterPro" id="IPR016939">
    <property type="entry name" value="Ribosomal_mS23_fun"/>
</dbReference>
<dbReference type="PANTHER" id="PTHR37799">
    <property type="entry name" value="37S RIBOSOMAL PROTEIN S25, MITOCHONDRIAL"/>
    <property type="match status" value="1"/>
</dbReference>
<dbReference type="PANTHER" id="PTHR37799:SF1">
    <property type="entry name" value="SMALL RIBOSOMAL SUBUNIT PROTEIN MS23"/>
    <property type="match status" value="1"/>
</dbReference>
<dbReference type="Pfam" id="PF13741">
    <property type="entry name" value="MRP-S25"/>
    <property type="match status" value="1"/>
</dbReference>
<dbReference type="PIRSF" id="PIRSF029764">
    <property type="entry name" value="RSM25"/>
    <property type="match status" value="1"/>
</dbReference>
<reference key="1">
    <citation type="journal article" date="2005" name="Nature">
        <title>Genomic sequence of the pathogenic and allergenic filamentous fungus Aspergillus fumigatus.</title>
        <authorList>
            <person name="Nierman W.C."/>
            <person name="Pain A."/>
            <person name="Anderson M.J."/>
            <person name="Wortman J.R."/>
            <person name="Kim H.S."/>
            <person name="Arroyo J."/>
            <person name="Berriman M."/>
            <person name="Abe K."/>
            <person name="Archer D.B."/>
            <person name="Bermejo C."/>
            <person name="Bennett J.W."/>
            <person name="Bowyer P."/>
            <person name="Chen D."/>
            <person name="Collins M."/>
            <person name="Coulsen R."/>
            <person name="Davies R."/>
            <person name="Dyer P.S."/>
            <person name="Farman M.L."/>
            <person name="Fedorova N."/>
            <person name="Fedorova N.D."/>
            <person name="Feldblyum T.V."/>
            <person name="Fischer R."/>
            <person name="Fosker N."/>
            <person name="Fraser A."/>
            <person name="Garcia J.L."/>
            <person name="Garcia M.J."/>
            <person name="Goble A."/>
            <person name="Goldman G.H."/>
            <person name="Gomi K."/>
            <person name="Griffith-Jones S."/>
            <person name="Gwilliam R."/>
            <person name="Haas B.J."/>
            <person name="Haas H."/>
            <person name="Harris D.E."/>
            <person name="Horiuchi H."/>
            <person name="Huang J."/>
            <person name="Humphray S."/>
            <person name="Jimenez J."/>
            <person name="Keller N."/>
            <person name="Khouri H."/>
            <person name="Kitamoto K."/>
            <person name="Kobayashi T."/>
            <person name="Konzack S."/>
            <person name="Kulkarni R."/>
            <person name="Kumagai T."/>
            <person name="Lafton A."/>
            <person name="Latge J.-P."/>
            <person name="Li W."/>
            <person name="Lord A."/>
            <person name="Lu C."/>
            <person name="Majoros W.H."/>
            <person name="May G.S."/>
            <person name="Miller B.L."/>
            <person name="Mohamoud Y."/>
            <person name="Molina M."/>
            <person name="Monod M."/>
            <person name="Mouyna I."/>
            <person name="Mulligan S."/>
            <person name="Murphy L.D."/>
            <person name="O'Neil S."/>
            <person name="Paulsen I."/>
            <person name="Penalva M.A."/>
            <person name="Pertea M."/>
            <person name="Price C."/>
            <person name="Pritchard B.L."/>
            <person name="Quail M.A."/>
            <person name="Rabbinowitsch E."/>
            <person name="Rawlins N."/>
            <person name="Rajandream M.A."/>
            <person name="Reichard U."/>
            <person name="Renauld H."/>
            <person name="Robson G.D."/>
            <person name="Rodriguez de Cordoba S."/>
            <person name="Rodriguez-Pena J.M."/>
            <person name="Ronning C.M."/>
            <person name="Rutter S."/>
            <person name="Salzberg S.L."/>
            <person name="Sanchez M."/>
            <person name="Sanchez-Ferrero J.C."/>
            <person name="Saunders D."/>
            <person name="Seeger K."/>
            <person name="Squares R."/>
            <person name="Squares S."/>
            <person name="Takeuchi M."/>
            <person name="Tekaia F."/>
            <person name="Turner G."/>
            <person name="Vazquez de Aldana C.R."/>
            <person name="Weidman J."/>
            <person name="White O."/>
            <person name="Woodward J.R."/>
            <person name="Yu J.-H."/>
            <person name="Fraser C.M."/>
            <person name="Galagan J.E."/>
            <person name="Asai K."/>
            <person name="Machida M."/>
            <person name="Hall N."/>
            <person name="Barrell B.G."/>
            <person name="Denning D.W."/>
        </authorList>
    </citation>
    <scope>NUCLEOTIDE SEQUENCE [LARGE SCALE GENOMIC DNA]</scope>
    <source>
        <strain>ATCC MYA-4609 / CBS 101355 / FGSC A1100 / Af293</strain>
    </source>
</reference>
<keyword id="KW-0496">Mitochondrion</keyword>
<keyword id="KW-1185">Reference proteome</keyword>
<keyword id="KW-0687">Ribonucleoprotein</keyword>
<keyword id="KW-0689">Ribosomal protein</keyword>
<feature type="chain" id="PRO_0000343542" description="Small ribosomal subunit protein mS23">
    <location>
        <begin position="1"/>
        <end position="258"/>
    </location>
</feature>
<comment type="subunit">
    <text evidence="1">Component of the mitochondrial small ribosomal subunit.</text>
</comment>
<comment type="subcellular location">
    <subcellularLocation>
        <location evidence="1">Mitochondrion</location>
    </subcellularLocation>
</comment>
<comment type="similarity">
    <text evidence="2">Belongs to the mitochondrion-specific ribosomal protein mS23 family.</text>
</comment>
<organism>
    <name type="scientific">Aspergillus fumigatus (strain ATCC MYA-4609 / CBS 101355 / FGSC A1100 / Af293)</name>
    <name type="common">Neosartorya fumigata</name>
    <dbReference type="NCBI Taxonomy" id="330879"/>
    <lineage>
        <taxon>Eukaryota</taxon>
        <taxon>Fungi</taxon>
        <taxon>Dikarya</taxon>
        <taxon>Ascomycota</taxon>
        <taxon>Pezizomycotina</taxon>
        <taxon>Eurotiomycetes</taxon>
        <taxon>Eurotiomycetidae</taxon>
        <taxon>Eurotiales</taxon>
        <taxon>Aspergillaceae</taxon>
        <taxon>Aspergillus</taxon>
        <taxon>Aspergillus subgen. Fumigati</taxon>
    </lineage>
</organism>
<gene>
    <name type="primary">rsm25</name>
    <name type="ORF">AFUA_4G07250</name>
</gene>